<name>Y1158_ARCFU</name>
<dbReference type="EMBL" id="AE000782">
    <property type="protein sequence ID" value="AAB90078.1"/>
    <property type="molecule type" value="Genomic_DNA"/>
</dbReference>
<dbReference type="PIR" id="E69394">
    <property type="entry name" value="E69394"/>
</dbReference>
<dbReference type="SMR" id="O29107"/>
<dbReference type="STRING" id="224325.AF_1158"/>
<dbReference type="PaxDb" id="224325-AF_1158"/>
<dbReference type="EnsemblBacteria" id="AAB90078">
    <property type="protein sequence ID" value="AAB90078"/>
    <property type="gene ID" value="AF_1158"/>
</dbReference>
<dbReference type="KEGG" id="afu:AF_1158"/>
<dbReference type="eggNOG" id="arCOG03363">
    <property type="taxonomic scope" value="Archaea"/>
</dbReference>
<dbReference type="HOGENOM" id="CLU_149095_0_0_2"/>
<dbReference type="Proteomes" id="UP000002199">
    <property type="component" value="Chromosome"/>
</dbReference>
<dbReference type="Gene3D" id="1.20.5.2950">
    <property type="match status" value="1"/>
</dbReference>
<dbReference type="InterPro" id="IPR014275">
    <property type="entry name" value="ATPase_A1A0-cplx_hsu"/>
</dbReference>
<dbReference type="NCBIfam" id="TIGR02926">
    <property type="entry name" value="AhaH"/>
    <property type="match status" value="1"/>
</dbReference>
<keyword id="KW-1185">Reference proteome</keyword>
<accession>O29107</accession>
<sequence length="112" mass="13068">MVTMDRTEILEKIKQAEIKVEEAIRAAEEERKNKILEAKMKAREIIESAEAEAVKVKEDILNSARQQIEAEKEEIRKRETKNIEDYAKKGKDNIMKAVEMLYNEFVGMMEHA</sequence>
<organism>
    <name type="scientific">Archaeoglobus fulgidus (strain ATCC 49558 / DSM 4304 / JCM 9628 / NBRC 100126 / VC-16)</name>
    <dbReference type="NCBI Taxonomy" id="224325"/>
    <lineage>
        <taxon>Archaea</taxon>
        <taxon>Methanobacteriati</taxon>
        <taxon>Methanobacteriota</taxon>
        <taxon>Archaeoglobi</taxon>
        <taxon>Archaeoglobales</taxon>
        <taxon>Archaeoglobaceae</taxon>
        <taxon>Archaeoglobus</taxon>
    </lineage>
</organism>
<proteinExistence type="predicted"/>
<reference key="1">
    <citation type="journal article" date="1997" name="Nature">
        <title>The complete genome sequence of the hyperthermophilic, sulphate-reducing archaeon Archaeoglobus fulgidus.</title>
        <authorList>
            <person name="Klenk H.-P."/>
            <person name="Clayton R.A."/>
            <person name="Tomb J.-F."/>
            <person name="White O."/>
            <person name="Nelson K.E."/>
            <person name="Ketchum K.A."/>
            <person name="Dodson R.J."/>
            <person name="Gwinn M.L."/>
            <person name="Hickey E.K."/>
            <person name="Peterson J.D."/>
            <person name="Richardson D.L."/>
            <person name="Kerlavage A.R."/>
            <person name="Graham D.E."/>
            <person name="Kyrpides N.C."/>
            <person name="Fleischmann R.D."/>
            <person name="Quackenbush J."/>
            <person name="Lee N.H."/>
            <person name="Sutton G.G."/>
            <person name="Gill S.R."/>
            <person name="Kirkness E.F."/>
            <person name="Dougherty B.A."/>
            <person name="McKenney K."/>
            <person name="Adams M.D."/>
            <person name="Loftus B.J."/>
            <person name="Peterson S.N."/>
            <person name="Reich C.I."/>
            <person name="McNeil L.K."/>
            <person name="Badger J.H."/>
            <person name="Glodek A."/>
            <person name="Zhou L."/>
            <person name="Overbeek R."/>
            <person name="Gocayne J.D."/>
            <person name="Weidman J.F."/>
            <person name="McDonald L.A."/>
            <person name="Utterback T.R."/>
            <person name="Cotton M.D."/>
            <person name="Spriggs T."/>
            <person name="Artiach P."/>
            <person name="Kaine B.P."/>
            <person name="Sykes S.M."/>
            <person name="Sadow P.W."/>
            <person name="D'Andrea K.P."/>
            <person name="Bowman C."/>
            <person name="Fujii C."/>
            <person name="Garland S.A."/>
            <person name="Mason T.M."/>
            <person name="Olsen G.J."/>
            <person name="Fraser C.M."/>
            <person name="Smith H.O."/>
            <person name="Woese C.R."/>
            <person name="Venter J.C."/>
        </authorList>
    </citation>
    <scope>NUCLEOTIDE SEQUENCE [LARGE SCALE GENOMIC DNA]</scope>
    <source>
        <strain>ATCC 49558 / DSM 4304 / JCM 9628 / NBRC 100126 / VC-16</strain>
    </source>
</reference>
<protein>
    <recommendedName>
        <fullName>Uncharacterized protein AF_1158</fullName>
    </recommendedName>
</protein>
<gene>
    <name type="ordered locus">AF_1158</name>
</gene>
<feature type="chain" id="PRO_0000127968" description="Uncharacterized protein AF_1158">
    <location>
        <begin position="1"/>
        <end position="112"/>
    </location>
</feature>